<comment type="function">
    <text evidence="1">Protein S19 forms a complex with S13 that binds strongly to the 16S ribosomal RNA.</text>
</comment>
<comment type="subcellular location">
    <subcellularLocation>
        <location>Plastid</location>
        <location>Chloroplast</location>
    </subcellularLocation>
</comment>
<comment type="similarity">
    <text evidence="1">Belongs to the universal ribosomal protein uS19 family.</text>
</comment>
<geneLocation type="chloroplast"/>
<sequence length="92" mass="10639">MTRSLKKNPFVANHLLRKIEKLNTKAEKEIIITWSRASTIIPTMIGHTIAIHNGREHLPIYITDRMVGHKLGEFSPTINFRGHAKNDNRSRR</sequence>
<evidence type="ECO:0000255" key="1">
    <source>
        <dbReference type="HAMAP-Rule" id="MF_00531"/>
    </source>
</evidence>
<evidence type="ECO:0000305" key="2"/>
<dbReference type="EMBL" id="AY780259">
    <property type="protein sequence ID" value="AAX21067.1"/>
    <property type="molecule type" value="Genomic_DNA"/>
</dbReference>
<dbReference type="RefSeq" id="YP_636339.1">
    <property type="nucleotide sequence ID" value="NC_008115.1"/>
</dbReference>
<dbReference type="SMR" id="Q49KV8"/>
<dbReference type="GeneID" id="4108489"/>
<dbReference type="GO" id="GO:0009507">
    <property type="term" value="C:chloroplast"/>
    <property type="evidence" value="ECO:0007669"/>
    <property type="project" value="UniProtKB-SubCell"/>
</dbReference>
<dbReference type="GO" id="GO:0005763">
    <property type="term" value="C:mitochondrial small ribosomal subunit"/>
    <property type="evidence" value="ECO:0007669"/>
    <property type="project" value="TreeGrafter"/>
</dbReference>
<dbReference type="GO" id="GO:0019843">
    <property type="term" value="F:rRNA binding"/>
    <property type="evidence" value="ECO:0007669"/>
    <property type="project" value="UniProtKB-UniRule"/>
</dbReference>
<dbReference type="GO" id="GO:0003735">
    <property type="term" value="F:structural constituent of ribosome"/>
    <property type="evidence" value="ECO:0007669"/>
    <property type="project" value="InterPro"/>
</dbReference>
<dbReference type="GO" id="GO:0000028">
    <property type="term" value="P:ribosomal small subunit assembly"/>
    <property type="evidence" value="ECO:0007669"/>
    <property type="project" value="TreeGrafter"/>
</dbReference>
<dbReference type="GO" id="GO:0006412">
    <property type="term" value="P:translation"/>
    <property type="evidence" value="ECO:0007669"/>
    <property type="project" value="UniProtKB-UniRule"/>
</dbReference>
<dbReference type="FunFam" id="3.30.860.10:FF:000001">
    <property type="entry name" value="30S ribosomal protein S19"/>
    <property type="match status" value="1"/>
</dbReference>
<dbReference type="Gene3D" id="3.30.860.10">
    <property type="entry name" value="30s Ribosomal Protein S19, Chain A"/>
    <property type="match status" value="1"/>
</dbReference>
<dbReference type="HAMAP" id="MF_00531">
    <property type="entry name" value="Ribosomal_uS19"/>
    <property type="match status" value="1"/>
</dbReference>
<dbReference type="InterPro" id="IPR002222">
    <property type="entry name" value="Ribosomal_uS19"/>
</dbReference>
<dbReference type="InterPro" id="IPR005732">
    <property type="entry name" value="Ribosomal_uS19_bac-type"/>
</dbReference>
<dbReference type="InterPro" id="IPR020934">
    <property type="entry name" value="Ribosomal_uS19_CS"/>
</dbReference>
<dbReference type="InterPro" id="IPR023575">
    <property type="entry name" value="Ribosomal_uS19_SF"/>
</dbReference>
<dbReference type="NCBIfam" id="TIGR01050">
    <property type="entry name" value="rpsS_bact"/>
    <property type="match status" value="1"/>
</dbReference>
<dbReference type="PANTHER" id="PTHR11880">
    <property type="entry name" value="RIBOSOMAL PROTEIN S19P FAMILY MEMBER"/>
    <property type="match status" value="1"/>
</dbReference>
<dbReference type="PANTHER" id="PTHR11880:SF8">
    <property type="entry name" value="SMALL RIBOSOMAL SUBUNIT PROTEIN US19M"/>
    <property type="match status" value="1"/>
</dbReference>
<dbReference type="Pfam" id="PF00203">
    <property type="entry name" value="Ribosomal_S19"/>
    <property type="match status" value="1"/>
</dbReference>
<dbReference type="PIRSF" id="PIRSF002144">
    <property type="entry name" value="Ribosomal_S19"/>
    <property type="match status" value="1"/>
</dbReference>
<dbReference type="PRINTS" id="PR00975">
    <property type="entry name" value="RIBOSOMALS19"/>
</dbReference>
<dbReference type="SUPFAM" id="SSF54570">
    <property type="entry name" value="Ribosomal protein S19"/>
    <property type="match status" value="1"/>
</dbReference>
<dbReference type="PROSITE" id="PS00323">
    <property type="entry name" value="RIBOSOMAL_S19"/>
    <property type="match status" value="1"/>
</dbReference>
<gene>
    <name evidence="1" type="primary">rps19</name>
</gene>
<reference key="1">
    <citation type="journal article" date="2005" name="DNA Res.">
        <title>Complete nucleotide sequence of the chloroplast genome from the Tasmanian blue gum, Eucalyptus globulus (Myrtaceae).</title>
        <authorList>
            <person name="Steane D.A."/>
        </authorList>
    </citation>
    <scope>NUCLEOTIDE SEQUENCE [LARGE SCALE GENOMIC DNA]</scope>
</reference>
<accession>Q49KV8</accession>
<keyword id="KW-0150">Chloroplast</keyword>
<keyword id="KW-0934">Plastid</keyword>
<keyword id="KW-0687">Ribonucleoprotein</keyword>
<keyword id="KW-0689">Ribosomal protein</keyword>
<keyword id="KW-0694">RNA-binding</keyword>
<keyword id="KW-0699">rRNA-binding</keyword>
<proteinExistence type="inferred from homology"/>
<organism>
    <name type="scientific">Eucalyptus globulus subsp. globulus</name>
    <name type="common">Tasmanian blue gum</name>
    <dbReference type="NCBI Taxonomy" id="71271"/>
    <lineage>
        <taxon>Eukaryota</taxon>
        <taxon>Viridiplantae</taxon>
        <taxon>Streptophyta</taxon>
        <taxon>Embryophyta</taxon>
        <taxon>Tracheophyta</taxon>
        <taxon>Spermatophyta</taxon>
        <taxon>Magnoliopsida</taxon>
        <taxon>eudicotyledons</taxon>
        <taxon>Gunneridae</taxon>
        <taxon>Pentapetalae</taxon>
        <taxon>rosids</taxon>
        <taxon>malvids</taxon>
        <taxon>Myrtales</taxon>
        <taxon>Myrtaceae</taxon>
        <taxon>Myrtoideae</taxon>
        <taxon>Eucalypteae</taxon>
        <taxon>Eucalyptus</taxon>
    </lineage>
</organism>
<protein>
    <recommendedName>
        <fullName evidence="1">Small ribosomal subunit protein uS19c</fullName>
    </recommendedName>
    <alternativeName>
        <fullName evidence="2">30S ribosomal protein S19, chloroplastic</fullName>
    </alternativeName>
</protein>
<feature type="chain" id="PRO_0000276906" description="Small ribosomal subunit protein uS19c">
    <location>
        <begin position="1"/>
        <end position="92"/>
    </location>
</feature>
<name>RR19_EUCGG</name>